<reference key="1">
    <citation type="journal article" date="2003" name="Mol. Microbiol.">
        <title>An integrated analysis of the genome of the hyperthermophilic archaeon Pyrococcus abyssi.</title>
        <authorList>
            <person name="Cohen G.N."/>
            <person name="Barbe V."/>
            <person name="Flament D."/>
            <person name="Galperin M."/>
            <person name="Heilig R."/>
            <person name="Lecompte O."/>
            <person name="Poch O."/>
            <person name="Prieur D."/>
            <person name="Querellou J."/>
            <person name="Ripp R."/>
            <person name="Thierry J.-C."/>
            <person name="Van der Oost J."/>
            <person name="Weissenbach J."/>
            <person name="Zivanovic Y."/>
            <person name="Forterre P."/>
        </authorList>
    </citation>
    <scope>NUCLEOTIDE SEQUENCE [LARGE SCALE GENOMIC DNA]</scope>
    <source>
        <strain>GE5 / Orsay</strain>
    </source>
</reference>
<reference key="2">
    <citation type="journal article" date="2012" name="Curr. Microbiol.">
        <title>Re-annotation of two hyperthermophilic archaea Pyrococcus abyssi GE5 and Pyrococcus furiosus DSM 3638.</title>
        <authorList>
            <person name="Gao J."/>
            <person name="Wang J."/>
        </authorList>
    </citation>
    <scope>GENOME REANNOTATION</scope>
    <source>
        <strain>GE5 / Orsay</strain>
    </source>
</reference>
<accession>Q9V0Q4</accession>
<accession>G8ZGT6</accession>
<protein>
    <recommendedName>
        <fullName evidence="1">Phosphoglycolate phosphatase</fullName>
        <shortName evidence="1">PGP</shortName>
        <shortName evidence="1">PGPase</shortName>
        <ecNumber evidence="1">3.1.3.18</ecNumber>
    </recommendedName>
</protein>
<proteinExistence type="inferred from homology"/>
<keyword id="KW-0119">Carbohydrate metabolism</keyword>
<keyword id="KW-0378">Hydrolase</keyword>
<keyword id="KW-0460">Magnesium</keyword>
<keyword id="KW-0479">Metal-binding</keyword>
<organism>
    <name type="scientific">Pyrococcus abyssi (strain GE5 / Orsay)</name>
    <dbReference type="NCBI Taxonomy" id="272844"/>
    <lineage>
        <taxon>Archaea</taxon>
        <taxon>Methanobacteriati</taxon>
        <taxon>Methanobacteriota</taxon>
        <taxon>Thermococci</taxon>
        <taxon>Thermococcales</taxon>
        <taxon>Thermococcaceae</taxon>
        <taxon>Pyrococcus</taxon>
    </lineage>
</organism>
<feature type="chain" id="PRO_0000146722" description="Phosphoglycolate phosphatase">
    <location>
        <begin position="1"/>
        <end position="233"/>
    </location>
</feature>
<feature type="active site" description="Nucleophile" evidence="1">
    <location>
        <position position="9"/>
    </location>
</feature>
<feature type="binding site" evidence="1">
    <location>
        <position position="9"/>
    </location>
    <ligand>
        <name>Mg(2+)</name>
        <dbReference type="ChEBI" id="CHEBI:18420"/>
    </ligand>
</feature>
<feature type="binding site" evidence="1">
    <location>
        <position position="11"/>
    </location>
    <ligand>
        <name>Mg(2+)</name>
        <dbReference type="ChEBI" id="CHEBI:18420"/>
    </ligand>
</feature>
<feature type="binding site" evidence="1">
    <location>
        <position position="154"/>
    </location>
    <ligand>
        <name>substrate</name>
    </ligand>
</feature>
<feature type="binding site" evidence="1">
    <location>
        <position position="177"/>
    </location>
    <ligand>
        <name>Mg(2+)</name>
        <dbReference type="ChEBI" id="CHEBI:18420"/>
    </ligand>
</feature>
<feature type="binding site" evidence="1">
    <location>
        <position position="181"/>
    </location>
    <ligand>
        <name>Mg(2+)</name>
        <dbReference type="ChEBI" id="CHEBI:18420"/>
    </ligand>
</feature>
<comment type="function">
    <text evidence="1">Catalyzes the dephosphorylation of 2-phosphoglycolate.</text>
</comment>
<comment type="catalytic activity">
    <reaction evidence="1">
        <text>2-phosphoglycolate + H2O = glycolate + phosphate</text>
        <dbReference type="Rhea" id="RHEA:14369"/>
        <dbReference type="ChEBI" id="CHEBI:15377"/>
        <dbReference type="ChEBI" id="CHEBI:29805"/>
        <dbReference type="ChEBI" id="CHEBI:43474"/>
        <dbReference type="ChEBI" id="CHEBI:58033"/>
        <dbReference type="EC" id="3.1.3.18"/>
    </reaction>
</comment>
<comment type="cofactor">
    <cofactor evidence="1">
        <name>Mg(2+)</name>
        <dbReference type="ChEBI" id="CHEBI:18420"/>
    </cofactor>
</comment>
<comment type="similarity">
    <text evidence="1">Belongs to the archaeal SPP-like hydrolase family.</text>
</comment>
<dbReference type="EC" id="3.1.3.18" evidence="1"/>
<dbReference type="EMBL" id="AJ248285">
    <property type="protein sequence ID" value="CAB49649.1"/>
    <property type="molecule type" value="Genomic_DNA"/>
</dbReference>
<dbReference type="EMBL" id="HE613800">
    <property type="protein sequence ID" value="CCE70131.1"/>
    <property type="molecule type" value="Genomic_DNA"/>
</dbReference>
<dbReference type="PIR" id="H75116">
    <property type="entry name" value="H75116"/>
</dbReference>
<dbReference type="RefSeq" id="WP_010867857.1">
    <property type="nucleotide sequence ID" value="NC_000868.1"/>
</dbReference>
<dbReference type="SMR" id="Q9V0Q4"/>
<dbReference type="STRING" id="272844.PAB2394"/>
<dbReference type="KEGG" id="pab:PAB2394"/>
<dbReference type="PATRIC" id="fig|272844.11.peg.775"/>
<dbReference type="eggNOG" id="arCOG01213">
    <property type="taxonomic scope" value="Archaea"/>
</dbReference>
<dbReference type="HOGENOM" id="CLU_044146_2_0_2"/>
<dbReference type="OrthoDB" id="120822at2157"/>
<dbReference type="PhylomeDB" id="Q9V0Q4"/>
<dbReference type="Proteomes" id="UP000000810">
    <property type="component" value="Chromosome"/>
</dbReference>
<dbReference type="Proteomes" id="UP000009139">
    <property type="component" value="Chromosome"/>
</dbReference>
<dbReference type="GO" id="GO:0005829">
    <property type="term" value="C:cytosol"/>
    <property type="evidence" value="ECO:0007669"/>
    <property type="project" value="TreeGrafter"/>
</dbReference>
<dbReference type="GO" id="GO:0000287">
    <property type="term" value="F:magnesium ion binding"/>
    <property type="evidence" value="ECO:0007669"/>
    <property type="project" value="InterPro"/>
</dbReference>
<dbReference type="GO" id="GO:0008967">
    <property type="term" value="F:phosphoglycolate phosphatase activity"/>
    <property type="evidence" value="ECO:0007669"/>
    <property type="project" value="UniProtKB-UniRule"/>
</dbReference>
<dbReference type="CDD" id="cd07514">
    <property type="entry name" value="HAD_Pase"/>
    <property type="match status" value="1"/>
</dbReference>
<dbReference type="Gene3D" id="3.90.1070.10">
    <property type="match status" value="1"/>
</dbReference>
<dbReference type="Gene3D" id="3.40.50.1000">
    <property type="entry name" value="HAD superfamily/HAD-like"/>
    <property type="match status" value="1"/>
</dbReference>
<dbReference type="HAMAP" id="MF_01419">
    <property type="entry name" value="GPH_hydrolase_arch"/>
    <property type="match status" value="1"/>
</dbReference>
<dbReference type="InterPro" id="IPR036412">
    <property type="entry name" value="HAD-like_sf"/>
</dbReference>
<dbReference type="InterPro" id="IPR023214">
    <property type="entry name" value="HAD_sf"/>
</dbReference>
<dbReference type="InterPro" id="IPR006382">
    <property type="entry name" value="PGPase"/>
</dbReference>
<dbReference type="NCBIfam" id="TIGR01487">
    <property type="entry name" value="Pglycolate_arch"/>
    <property type="match status" value="1"/>
</dbReference>
<dbReference type="NCBIfam" id="NF002245">
    <property type="entry name" value="PRK01158.1"/>
    <property type="match status" value="1"/>
</dbReference>
<dbReference type="NCBIfam" id="TIGR01482">
    <property type="entry name" value="SPP-subfamily"/>
    <property type="match status" value="1"/>
</dbReference>
<dbReference type="PANTHER" id="PTHR10000:SF8">
    <property type="entry name" value="HAD SUPERFAMILY HYDROLASE-LIKE, TYPE 3"/>
    <property type="match status" value="1"/>
</dbReference>
<dbReference type="PANTHER" id="PTHR10000">
    <property type="entry name" value="PHOSPHOSERINE PHOSPHATASE"/>
    <property type="match status" value="1"/>
</dbReference>
<dbReference type="Pfam" id="PF08282">
    <property type="entry name" value="Hydrolase_3"/>
    <property type="match status" value="2"/>
</dbReference>
<dbReference type="SFLD" id="SFLDG01140">
    <property type="entry name" value="C2.B:_Phosphomannomutase_and_P"/>
    <property type="match status" value="1"/>
</dbReference>
<dbReference type="SFLD" id="SFLDS00003">
    <property type="entry name" value="Haloacid_Dehalogenase"/>
    <property type="match status" value="1"/>
</dbReference>
<dbReference type="SUPFAM" id="SSF56784">
    <property type="entry name" value="HAD-like"/>
    <property type="match status" value="1"/>
</dbReference>
<sequence length="233" mass="25785">MKIKAISIDIDGTITYPNRMIHEKALEAIRKAESLGIPVMLVTGNTVQFAEAASILIGTSGPVVAEDGGAISYRKKRIFLANMDEEWILWNEIRKRFPNARTSHTMPDRRAGLVIMRETIDVETVRKIIHELGLNLVAVDSGFAIHVKKPWINKGAGIEKACELLGIKPREVAHIGDGENDLDAFKVVGYRIAIAQAPDVLKENADYVTEKEYGEGGAEAIFHVLRVSGYMDF</sequence>
<name>PGP_PYRAB</name>
<evidence type="ECO:0000255" key="1">
    <source>
        <dbReference type="HAMAP-Rule" id="MF_01419"/>
    </source>
</evidence>
<gene>
    <name type="ordered locus">PYRAB07350</name>
    <name type="ORF">PAB2394</name>
</gene>